<comment type="function">
    <text evidence="1">Catalyzes the dehydration of methylthioribulose-1-phosphate (MTRu-1-P) into 2,3-diketo-5-methylthiopentyl-1-phosphate (DK-MTP-1-P).</text>
</comment>
<comment type="catalytic activity">
    <reaction evidence="1">
        <text>5-(methylsulfanyl)-D-ribulose 1-phosphate = 5-methylsulfanyl-2,3-dioxopentyl phosphate + H2O</text>
        <dbReference type="Rhea" id="RHEA:15549"/>
        <dbReference type="ChEBI" id="CHEBI:15377"/>
        <dbReference type="ChEBI" id="CHEBI:58548"/>
        <dbReference type="ChEBI" id="CHEBI:58828"/>
        <dbReference type="EC" id="4.2.1.109"/>
    </reaction>
</comment>
<comment type="cofactor">
    <cofactor evidence="1">
        <name>Zn(2+)</name>
        <dbReference type="ChEBI" id="CHEBI:29105"/>
    </cofactor>
    <text evidence="1">Binds 1 zinc ion per subunit.</text>
</comment>
<comment type="pathway">
    <text evidence="1">Amino-acid biosynthesis; L-methionine biosynthesis via salvage pathway; L-methionine from S-methyl-5-thio-alpha-D-ribose 1-phosphate: step 2/6.</text>
</comment>
<comment type="subcellular location">
    <subcellularLocation>
        <location evidence="1">Cytoplasm</location>
    </subcellularLocation>
</comment>
<comment type="similarity">
    <text evidence="1">Belongs to the aldolase class II family. MtnB subfamily.</text>
</comment>
<comment type="sequence caution" evidence="2">
    <conflict type="erroneous gene model prediction">
        <sequence resource="EMBL-CDS" id="EAL17715"/>
    </conflict>
</comment>
<protein>
    <recommendedName>
        <fullName evidence="1">Methylthioribulose-1-phosphate dehydratase</fullName>
        <shortName evidence="1">MTRu-1-P dehydratase</shortName>
        <ecNumber evidence="1">4.2.1.109</ecNumber>
    </recommendedName>
</protein>
<feature type="chain" id="PRO_0000410008" description="Methylthioribulose-1-phosphate dehydratase">
    <location>
        <begin position="1"/>
        <end position="244"/>
    </location>
</feature>
<feature type="active site" description="Proton donor/acceptor" evidence="1">
    <location>
        <position position="148"/>
    </location>
</feature>
<feature type="binding site" evidence="1">
    <location>
        <position position="104"/>
    </location>
    <ligand>
        <name>substrate</name>
    </ligand>
</feature>
<feature type="binding site" evidence="1">
    <location>
        <position position="122"/>
    </location>
    <ligand>
        <name>Zn(2+)</name>
        <dbReference type="ChEBI" id="CHEBI:29105"/>
    </ligand>
</feature>
<feature type="binding site" evidence="1">
    <location>
        <position position="124"/>
    </location>
    <ligand>
        <name>Zn(2+)</name>
        <dbReference type="ChEBI" id="CHEBI:29105"/>
    </ligand>
</feature>
<feature type="binding site" evidence="1">
    <location>
        <position position="204"/>
    </location>
    <ligand>
        <name>Zn(2+)</name>
        <dbReference type="ChEBI" id="CHEBI:29105"/>
    </ligand>
</feature>
<proteinExistence type="inferred from homology"/>
<accession>P0CM15</accession>
<accession>Q55IV5</accession>
<accession>Q5KCU6</accession>
<organism>
    <name type="scientific">Cryptococcus neoformans var. neoformans serotype D (strain B-3501A)</name>
    <name type="common">Filobasidiella neoformans</name>
    <dbReference type="NCBI Taxonomy" id="283643"/>
    <lineage>
        <taxon>Eukaryota</taxon>
        <taxon>Fungi</taxon>
        <taxon>Dikarya</taxon>
        <taxon>Basidiomycota</taxon>
        <taxon>Agaricomycotina</taxon>
        <taxon>Tremellomycetes</taxon>
        <taxon>Tremellales</taxon>
        <taxon>Cryptococcaceae</taxon>
        <taxon>Cryptococcus</taxon>
        <taxon>Cryptococcus neoformans species complex</taxon>
    </lineage>
</organism>
<dbReference type="EC" id="4.2.1.109" evidence="1"/>
<dbReference type="EMBL" id="AAEY01000057">
    <property type="protein sequence ID" value="EAL17715.1"/>
    <property type="status" value="ALT_SEQ"/>
    <property type="molecule type" value="Genomic_DNA"/>
</dbReference>
<dbReference type="RefSeq" id="XP_772362.1">
    <property type="nucleotide sequence ID" value="XM_767269.1"/>
</dbReference>
<dbReference type="SMR" id="P0CM15"/>
<dbReference type="EnsemblFungi" id="AAW45095">
    <property type="protein sequence ID" value="AAW45095"/>
    <property type="gene ID" value="CNH02290"/>
</dbReference>
<dbReference type="GeneID" id="4939279"/>
<dbReference type="KEGG" id="cnb:CNBL2300"/>
<dbReference type="HOGENOM" id="CLU_006033_4_0_1"/>
<dbReference type="OrthoDB" id="133at5206"/>
<dbReference type="UniPathway" id="UPA00904">
    <property type="reaction ID" value="UER00875"/>
</dbReference>
<dbReference type="GO" id="GO:0005737">
    <property type="term" value="C:cytoplasm"/>
    <property type="evidence" value="ECO:0007669"/>
    <property type="project" value="UniProtKB-SubCell"/>
</dbReference>
<dbReference type="GO" id="GO:0046570">
    <property type="term" value="F:methylthioribulose 1-phosphate dehydratase activity"/>
    <property type="evidence" value="ECO:0007669"/>
    <property type="project" value="UniProtKB-UniRule"/>
</dbReference>
<dbReference type="GO" id="GO:0008270">
    <property type="term" value="F:zinc ion binding"/>
    <property type="evidence" value="ECO:0007669"/>
    <property type="project" value="UniProtKB-UniRule"/>
</dbReference>
<dbReference type="GO" id="GO:0019509">
    <property type="term" value="P:L-methionine salvage from methylthioadenosine"/>
    <property type="evidence" value="ECO:0007669"/>
    <property type="project" value="UniProtKB-UniRule"/>
</dbReference>
<dbReference type="FunFam" id="3.40.225.10:FF:000003">
    <property type="entry name" value="Methylthioribulose-1-phosphate dehydratase"/>
    <property type="match status" value="1"/>
</dbReference>
<dbReference type="Gene3D" id="3.40.225.10">
    <property type="entry name" value="Class II aldolase/adducin N-terminal domain"/>
    <property type="match status" value="1"/>
</dbReference>
<dbReference type="HAMAP" id="MF_03116">
    <property type="entry name" value="Salvage_MtnB_euk"/>
    <property type="match status" value="1"/>
</dbReference>
<dbReference type="InterPro" id="IPR001303">
    <property type="entry name" value="Aldolase_II/adducin_N"/>
</dbReference>
<dbReference type="InterPro" id="IPR036409">
    <property type="entry name" value="Aldolase_II/adducin_N_sf"/>
</dbReference>
<dbReference type="InterPro" id="IPR017714">
    <property type="entry name" value="MethylthioRu-1-P_deHdtase_MtnB"/>
</dbReference>
<dbReference type="InterPro" id="IPR027514">
    <property type="entry name" value="Salvage_MtnB_euk"/>
</dbReference>
<dbReference type="NCBIfam" id="TIGR03328">
    <property type="entry name" value="salvage_mtnB"/>
    <property type="match status" value="1"/>
</dbReference>
<dbReference type="PANTHER" id="PTHR10640">
    <property type="entry name" value="METHYLTHIORIBULOSE-1-PHOSPHATE DEHYDRATASE"/>
    <property type="match status" value="1"/>
</dbReference>
<dbReference type="PANTHER" id="PTHR10640:SF7">
    <property type="entry name" value="METHYLTHIORIBULOSE-1-PHOSPHATE DEHYDRATASE"/>
    <property type="match status" value="1"/>
</dbReference>
<dbReference type="Pfam" id="PF00596">
    <property type="entry name" value="Aldolase_II"/>
    <property type="match status" value="1"/>
</dbReference>
<dbReference type="SMART" id="SM01007">
    <property type="entry name" value="Aldolase_II"/>
    <property type="match status" value="1"/>
</dbReference>
<dbReference type="SUPFAM" id="SSF53639">
    <property type="entry name" value="AraD/HMP-PK domain-like"/>
    <property type="match status" value="1"/>
</dbReference>
<gene>
    <name evidence="1" type="primary">MDE1</name>
    <name type="ordered locus">CNBL2300</name>
</gene>
<reference key="1">
    <citation type="journal article" date="2005" name="Science">
        <title>The genome of the basidiomycetous yeast and human pathogen Cryptococcus neoformans.</title>
        <authorList>
            <person name="Loftus B.J."/>
            <person name="Fung E."/>
            <person name="Roncaglia P."/>
            <person name="Rowley D."/>
            <person name="Amedeo P."/>
            <person name="Bruno D."/>
            <person name="Vamathevan J."/>
            <person name="Miranda M."/>
            <person name="Anderson I.J."/>
            <person name="Fraser J.A."/>
            <person name="Allen J.E."/>
            <person name="Bosdet I.E."/>
            <person name="Brent M.R."/>
            <person name="Chiu R."/>
            <person name="Doering T.L."/>
            <person name="Donlin M.J."/>
            <person name="D'Souza C.A."/>
            <person name="Fox D.S."/>
            <person name="Grinberg V."/>
            <person name="Fu J."/>
            <person name="Fukushima M."/>
            <person name="Haas B.J."/>
            <person name="Huang J.C."/>
            <person name="Janbon G."/>
            <person name="Jones S.J.M."/>
            <person name="Koo H.L."/>
            <person name="Krzywinski M.I."/>
            <person name="Kwon-Chung K.J."/>
            <person name="Lengeler K.B."/>
            <person name="Maiti R."/>
            <person name="Marra M.A."/>
            <person name="Marra R.E."/>
            <person name="Mathewson C.A."/>
            <person name="Mitchell T.G."/>
            <person name="Pertea M."/>
            <person name="Riggs F.R."/>
            <person name="Salzberg S.L."/>
            <person name="Schein J.E."/>
            <person name="Shvartsbeyn A."/>
            <person name="Shin H."/>
            <person name="Shumway M."/>
            <person name="Specht C.A."/>
            <person name="Suh B.B."/>
            <person name="Tenney A."/>
            <person name="Utterback T.R."/>
            <person name="Wickes B.L."/>
            <person name="Wortman J.R."/>
            <person name="Wye N.H."/>
            <person name="Kronstad J.W."/>
            <person name="Lodge J.K."/>
            <person name="Heitman J."/>
            <person name="Davis R.W."/>
            <person name="Fraser C.M."/>
            <person name="Hyman R.W."/>
        </authorList>
    </citation>
    <scope>NUCLEOTIDE SEQUENCE [LARGE SCALE GENOMIC DNA]</scope>
    <source>
        <strain>B-3501A</strain>
    </source>
</reference>
<sequence length="244" mass="27292">MAKTYTPEEAEALVHSHDPEHPANLICDLCREFYKLGWVTGTGGGISIRKDDVVYLAPSGVQKERIKPEHIFVLPFAQSSVPKPGSKRDFIRIPSKKGLNESQCTPLFWNAFTMREAGACIHTHSQHAVLLTLLLPRDAPSFRISHQEMIKGVRLGGVGKTLKFFETLEVPIIDNTAFEEDLTEGMAAAMARYPDAPAILVRRHGVYVWGNTWEQAKTQAECLDYLFEIACKMIQNKIPLEGDT</sequence>
<evidence type="ECO:0000255" key="1">
    <source>
        <dbReference type="HAMAP-Rule" id="MF_03116"/>
    </source>
</evidence>
<evidence type="ECO:0000305" key="2"/>
<name>MTNB_CRYNB</name>
<keyword id="KW-0028">Amino-acid biosynthesis</keyword>
<keyword id="KW-0963">Cytoplasm</keyword>
<keyword id="KW-0456">Lyase</keyword>
<keyword id="KW-0479">Metal-binding</keyword>
<keyword id="KW-0486">Methionine biosynthesis</keyword>
<keyword id="KW-0862">Zinc</keyword>